<sequence length="208" mass="23230">MAEAEGSSLLLLPPPPPPPRMAEVEAPTAAETDMKQYQGSGGVAMDVERSRFPYCVVWTPIPVLTWFFPIIGHMGICTSTGVIRDFAGPYFVSEDNMAFGKPAKYWKLDPAQVYASGPNAWDTAVHDASEEYKHRMHNLCCDNCHSHVALALNLMRYNNSTNWNMVTLCFFCLLYGKYVSVGAFVKTWLPFILLLGIILTVSLVFNLR</sequence>
<comment type="interaction">
    <interactant intactId="EBI-347385">
        <id>Q9H0R3</id>
    </interactant>
    <interactant intactId="EBI-13059134">
        <id>Q13520</id>
        <label>AQP6</label>
    </interactant>
    <organismsDiffer>false</organismsDiffer>
    <experiments>3</experiments>
</comment>
<comment type="interaction">
    <interactant intactId="EBI-347385">
        <id>Q9H0R3</id>
    </interactant>
    <interactant intactId="EBI-700794">
        <id>Q13323</id>
        <label>BIK</label>
    </interactant>
    <organismsDiffer>false</organismsDiffer>
    <experiments>3</experiments>
</comment>
<comment type="interaction">
    <interactant intactId="EBI-347385">
        <id>Q9H0R3</id>
    </interactant>
    <interactant intactId="EBI-11532900">
        <id>J3KQ12</id>
        <label>BSCL2</label>
    </interactant>
    <organismsDiffer>false</organismsDiffer>
    <experiments>3</experiments>
</comment>
<comment type="interaction">
    <interactant intactId="EBI-347385">
        <id>Q9H0R3</id>
    </interactant>
    <interactant intactId="EBI-7797864">
        <id>P11912</id>
        <label>CD79A</label>
    </interactant>
    <organismsDiffer>false</organismsDiffer>
    <experiments>3</experiments>
</comment>
<comment type="interaction">
    <interactant intactId="EBI-347385">
        <id>Q9H0R3</id>
    </interactant>
    <interactant intactId="EBI-18400628">
        <id>O00501</id>
        <label>CLDN5</label>
    </interactant>
    <organismsDiffer>false</organismsDiffer>
    <experiments>3</experiments>
</comment>
<comment type="interaction">
    <interactant intactId="EBI-347385">
        <id>Q9H0R3</id>
    </interactant>
    <interactant intactId="EBI-17274839">
        <id>P58418</id>
        <label>CLRN1</label>
    </interactant>
    <organismsDiffer>false</organismsDiffer>
    <experiments>3</experiments>
</comment>
<comment type="interaction">
    <interactant intactId="EBI-347385">
        <id>Q9H0R3</id>
    </interactant>
    <interactant intactId="EBI-372265">
        <id>P21964</id>
        <label>COMT</label>
    </interactant>
    <organismsDiffer>false</organismsDiffer>
    <experiments>3</experiments>
</comment>
<comment type="interaction">
    <interactant intactId="EBI-347385">
        <id>Q9H0R3</id>
    </interactant>
    <interactant intactId="EBI-17233035">
        <id>Q9BUF7-2</id>
        <label>CRB3</label>
    </interactant>
    <organismsDiffer>false</organismsDiffer>
    <experiments>3</experiments>
</comment>
<comment type="interaction">
    <interactant intactId="EBI-347385">
        <id>Q9H0R3</id>
    </interactant>
    <interactant intactId="EBI-6942903">
        <id>Q96BA8</id>
        <label>CREB3L1</label>
    </interactant>
    <organismsDiffer>false</organismsDiffer>
    <experiments>3</experiments>
</comment>
<comment type="interaction">
    <interactant intactId="EBI-347385">
        <id>Q9H0R3</id>
    </interactant>
    <interactant intactId="EBI-3915253">
        <id>Q15125</id>
        <label>EBP</label>
    </interactant>
    <organismsDiffer>false</organismsDiffer>
    <experiments>3</experiments>
</comment>
<comment type="interaction">
    <interactant intactId="EBI-347385">
        <id>Q9H0R3</id>
    </interactant>
    <interactant intactId="EBI-18535450">
        <id>Q9GZR5</id>
        <label>ELOVL4</label>
    </interactant>
    <organismsDiffer>false</organismsDiffer>
    <experiments>3</experiments>
</comment>
<comment type="interaction">
    <interactant intactId="EBI-347385">
        <id>Q9H0R3</id>
    </interactant>
    <interactant intactId="EBI-711490">
        <id>Q9UKR5</id>
        <label>ERG28</label>
    </interactant>
    <organismsDiffer>false</organismsDiffer>
    <experiments>3</experiments>
</comment>
<comment type="interaction">
    <interactant intactId="EBI-347385">
        <id>Q9H0R3</id>
    </interactant>
    <interactant intactId="EBI-781551">
        <id>Q9Y282</id>
        <label>ERGIC3</label>
    </interactant>
    <organismsDiffer>false</organismsDiffer>
    <experiments>3</experiments>
</comment>
<comment type="interaction">
    <interactant intactId="EBI-347385">
        <id>Q9H0R3</id>
    </interactant>
    <interactant intactId="EBI-17640610">
        <id>P34910-2</id>
        <label>EVI2B</label>
    </interactant>
    <organismsDiffer>false</organismsDiffer>
    <experiments>3</experiments>
</comment>
<comment type="interaction">
    <interactant intactId="EBI-347385">
        <id>Q9H0R3</id>
    </interactant>
    <interactant intactId="EBI-18636064">
        <id>Q8TBP5</id>
        <label>FAM174A</label>
    </interactant>
    <organismsDiffer>false</organismsDiffer>
    <experiments>3</experiments>
</comment>
<comment type="interaction">
    <interactant intactId="EBI-347385">
        <id>Q9H0R3</id>
    </interactant>
    <interactant intactId="EBI-18304435">
        <id>Q5JX71</id>
        <label>FAM209A</label>
    </interactant>
    <organismsDiffer>false</organismsDiffer>
    <experiments>3</experiments>
</comment>
<comment type="interaction">
    <interactant intactId="EBI-347385">
        <id>Q9H0R3</id>
    </interactant>
    <interactant intactId="EBI-11427100">
        <id>P31937</id>
        <label>HIBADH</label>
    </interactant>
    <organismsDiffer>false</organismsDiffer>
    <experiments>3</experiments>
</comment>
<comment type="interaction">
    <interactant intactId="EBI-347385">
        <id>Q9H0R3</id>
    </interactant>
    <interactant intactId="EBI-18053395">
        <id>Q7Z5P4</id>
        <label>HSD17B13</label>
    </interactant>
    <organismsDiffer>false</organismsDiffer>
    <experiments>3</experiments>
</comment>
<comment type="interaction">
    <interactant intactId="EBI-347385">
        <id>Q9H0R3</id>
    </interactant>
    <interactant intactId="EBI-8632435">
        <id>P43628</id>
        <label>KIR2DL3</label>
    </interactant>
    <organismsDiffer>false</organismsDiffer>
    <experiments>3</experiments>
</comment>
<comment type="interaction">
    <interactant intactId="EBI-347385">
        <id>Q9H0R3</id>
    </interactant>
    <interactant intactId="EBI-358888">
        <id>Q96AG4</id>
        <label>LRRC59</label>
    </interactant>
    <organismsDiffer>false</organismsDiffer>
    <experiments>3</experiments>
</comment>
<comment type="interaction">
    <interactant intactId="EBI-347385">
        <id>Q9H0R3</id>
    </interactant>
    <interactant intactId="EBI-14061804">
        <id>Q68D85</id>
        <label>NCR3LG1</label>
    </interactant>
    <organismsDiffer>false</organismsDiffer>
    <experiments>3</experiments>
</comment>
<comment type="interaction">
    <interactant intactId="EBI-347385">
        <id>Q9H0R3</id>
    </interactant>
    <interactant intactId="EBI-594836">
        <id>O00623</id>
        <label>PEX12</label>
    </interactant>
    <organismsDiffer>false</organismsDiffer>
    <experiments>3</experiments>
</comment>
<comment type="interaction">
    <interactant intactId="EBI-347385">
        <id>Q9H0R3</id>
    </interactant>
    <interactant intactId="EBI-11161398">
        <id>O14684</id>
        <label>PTGES</label>
    </interactant>
    <organismsDiffer>false</organismsDiffer>
    <experiments>3</experiments>
</comment>
<comment type="interaction">
    <interactant intactId="EBI-347385">
        <id>Q9H0R3</id>
    </interactant>
    <interactant intactId="EBI-10192441">
        <id>Q86VR2</id>
        <label>RETREG3</label>
    </interactant>
    <organismsDiffer>false</organismsDiffer>
    <experiments>3</experiments>
</comment>
<comment type="interaction">
    <interactant intactId="EBI-347385">
        <id>Q9H0R3</id>
    </interactant>
    <interactant intactId="EBI-18397230">
        <id>Q6P5S7</id>
        <label>RNASEK</label>
    </interactant>
    <organismsDiffer>false</organismsDiffer>
    <experiments>3</experiments>
</comment>
<comment type="interaction">
    <interactant intactId="EBI-347385">
        <id>Q9H0R3</id>
    </interactant>
    <interactant intactId="EBI-3923031">
        <id>Q14973</id>
        <label>SLC10A1</label>
    </interactant>
    <organismsDiffer>false</organismsDiffer>
    <experiments>3</experiments>
</comment>
<comment type="interaction">
    <interactant intactId="EBI-347385">
        <id>Q9H0R3</id>
    </interactant>
    <interactant intactId="EBI-18114847">
        <id>Q12908</id>
        <label>SLC10A2</label>
    </interactant>
    <organismsDiffer>false</organismsDiffer>
    <experiments>3</experiments>
</comment>
<comment type="interaction">
    <interactant intactId="EBI-347385">
        <id>Q9H0R3</id>
    </interactant>
    <interactant intactId="EBI-17280858">
        <id>Q8WWF3</id>
        <label>SSMEM1</label>
    </interactant>
    <organismsDiffer>false</organismsDiffer>
    <experiments>3</experiments>
</comment>
<comment type="interaction">
    <interactant intactId="EBI-347385">
        <id>Q9H0R3</id>
    </interactant>
    <interactant intactId="EBI-712466">
        <id>Q16623</id>
        <label>STX1A</label>
    </interactant>
    <organismsDiffer>false</organismsDiffer>
    <experiments>3</experiments>
</comment>
<comment type="interaction">
    <interactant intactId="EBI-347385">
        <id>Q9H0R3</id>
    </interactant>
    <interactant intactId="EBI-8638294">
        <id>Q9NUH8</id>
        <label>TMEM14B</label>
    </interactant>
    <organismsDiffer>false</organismsDiffer>
    <experiments>3</experiments>
</comment>
<comment type="interaction">
    <interactant intactId="EBI-347385">
        <id>Q9H0R3</id>
    </interactant>
    <interactant intactId="EBI-11722971">
        <id>Q53FP2</id>
        <label>TMEM35A</label>
    </interactant>
    <organismsDiffer>false</organismsDiffer>
    <experiments>3</experiments>
</comment>
<comment type="interaction">
    <interactant intactId="EBI-347385">
        <id>Q9H0R3</id>
    </interactant>
    <interactant intactId="EBI-12345267">
        <id>O15393-2</id>
        <label>TMPRSS2</label>
    </interactant>
    <organismsDiffer>false</organismsDiffer>
    <experiments>3</experiments>
</comment>
<comment type="interaction">
    <interactant intactId="EBI-347385">
        <id>Q9H0R3</id>
    </interactant>
    <interactant intactId="EBI-6447886">
        <id>Q9Y320</id>
        <label>TMX2</label>
    </interactant>
    <organismsDiffer>false</organismsDiffer>
    <experiments>3</experiments>
</comment>
<comment type="interaction">
    <interactant intactId="EBI-347385">
        <id>Q9H0R3</id>
    </interactant>
    <interactant intactId="EBI-12837904">
        <id>Q96MV8</id>
        <label>ZDHHC15</label>
    </interactant>
    <organismsDiffer>false</organismsDiffer>
    <experiments>3</experiments>
</comment>
<comment type="subcellular location">
    <subcellularLocation>
        <location evidence="5">Membrane</location>
        <topology evidence="5">Multi-pass membrane protein</topology>
    </subcellularLocation>
    <subcellularLocation>
        <location evidence="3">Cell projection</location>
        <location evidence="3">Dendrite</location>
    </subcellularLocation>
</comment>
<comment type="alternative products">
    <event type="alternative splicing"/>
    <isoform>
        <id>Q9H0R3-1</id>
        <name>1</name>
        <sequence type="displayed"/>
    </isoform>
    <isoform>
        <id>Q9H0R3-2</id>
        <name>2</name>
        <sequence type="described" ref="VSP_020090"/>
    </isoform>
</comment>
<comment type="tissue specificity">
    <text evidence="3">Widely expressed. The highest expression is observed in the brain.</text>
</comment>
<comment type="disease" evidence="3">
    <disease id="DI-06187">
        <name>Neurodevelopmental disorder with motor and speech delay and behavioral abnormalities</name>
        <acronym>NEDMOSBA</acronym>
        <description>An autosomal recessive disorder characterized by global developmental delay, impaired intellectual development, speech delay, delayed walking, and behavioral abnormalities. Some patients develop spastic tetraplegia with inability to walk independently and never gain proper speech. Affected individuals may have variable additional features, including poor overall growth, hypotonia, tremor, ocular anomalies, seizures, and non-specific dysmorphic facial features.</description>
        <dbReference type="MIM" id="619470"/>
    </disease>
    <text>The disease may be caused by variants affecting the gene represented in this entry.</text>
</comment>
<comment type="sequence caution" evidence="5">
    <conflict type="erroneous initiation">
        <sequence resource="EMBL-CDS" id="CAB66618"/>
    </conflict>
</comment>
<feature type="chain" id="PRO_0000247963" description="Transmembrane protein 222">
    <location>
        <begin position="1"/>
        <end position="208"/>
    </location>
</feature>
<feature type="topological domain" description="Extracellular" evidence="1">
    <location>
        <begin position="1"/>
        <end position="55"/>
    </location>
</feature>
<feature type="transmembrane region" description="Helical" evidence="1">
    <location>
        <begin position="56"/>
        <end position="76"/>
    </location>
</feature>
<feature type="topological domain" description="Cytoplasmic" evidence="1">
    <location>
        <begin position="77"/>
        <end position="164"/>
    </location>
</feature>
<feature type="transmembrane region" description="Helical" evidence="1">
    <location>
        <begin position="165"/>
        <end position="185"/>
    </location>
</feature>
<feature type="topological domain" description="Extracellular" evidence="1">
    <location>
        <position position="186"/>
    </location>
</feature>
<feature type="transmembrane region" description="Helical" evidence="1">
    <location>
        <begin position="187"/>
        <end position="207"/>
    </location>
</feature>
<feature type="topological domain" description="Cytoplasmic" evidence="1">
    <location>
        <position position="208"/>
    </location>
</feature>
<feature type="region of interest" description="Disordered" evidence="2">
    <location>
        <begin position="1"/>
        <end position="26"/>
    </location>
</feature>
<feature type="splice variant" id="VSP_020090" description="In isoform 2." evidence="4">
    <location>
        <begin position="1"/>
        <end position="96"/>
    </location>
</feature>
<feature type="sequence variant" id="VAR_086147" description="In NEDMOSBA." evidence="3">
    <original>G</original>
    <variation>S</variation>
    <location>
        <position position="72"/>
    </location>
</feature>
<feature type="sequence variant" id="VAR_086148" description="In NEDMOSBA; uncertain significance." evidence="3">
    <location>
        <begin position="112"/>
        <end position="208"/>
    </location>
</feature>
<feature type="sequence variant" id="VAR_086149" description="In NEDMOSBA; uncertain significance." evidence="3">
    <original>V</original>
    <variation>M</variation>
    <location>
        <position position="148"/>
    </location>
</feature>
<feature type="sequence variant" id="VAR_086150" description="In NEDMOSBA; uncertain significance." evidence="3">
    <original>G</original>
    <variation>R</variation>
    <location>
        <position position="176"/>
    </location>
</feature>
<feature type="sequence variant" id="VAR_086151" description="In NEDMOSBA; uncertain significance." evidence="3">
    <location>
        <position position="179"/>
    </location>
</feature>
<feature type="sequence conflict" description="In Ref. 5; BAD96362." evidence="5" ref="5">
    <original>K</original>
    <variation>E</variation>
    <location>
        <position position="101"/>
    </location>
</feature>
<organism>
    <name type="scientific">Homo sapiens</name>
    <name type="common">Human</name>
    <dbReference type="NCBI Taxonomy" id="9606"/>
    <lineage>
        <taxon>Eukaryota</taxon>
        <taxon>Metazoa</taxon>
        <taxon>Chordata</taxon>
        <taxon>Craniata</taxon>
        <taxon>Vertebrata</taxon>
        <taxon>Euteleostomi</taxon>
        <taxon>Mammalia</taxon>
        <taxon>Eutheria</taxon>
        <taxon>Euarchontoglires</taxon>
        <taxon>Primates</taxon>
        <taxon>Haplorrhini</taxon>
        <taxon>Catarrhini</taxon>
        <taxon>Hominidae</taxon>
        <taxon>Homo</taxon>
    </lineage>
</organism>
<proteinExistence type="evidence at protein level"/>
<evidence type="ECO:0000255" key="1"/>
<evidence type="ECO:0000256" key="2">
    <source>
        <dbReference type="SAM" id="MobiDB-lite"/>
    </source>
</evidence>
<evidence type="ECO:0000269" key="3">
    <source>
    </source>
</evidence>
<evidence type="ECO:0000303" key="4">
    <source>
    </source>
</evidence>
<evidence type="ECO:0000305" key="5"/>
<protein>
    <recommendedName>
        <fullName>Transmembrane protein 222</fullName>
    </recommendedName>
</protein>
<gene>
    <name type="primary">TMEM222</name>
    <name type="synonym">C1orf160</name>
</gene>
<dbReference type="EMBL" id="FO393419">
    <property type="status" value="NOT_ANNOTATED_CDS"/>
    <property type="molecule type" value="Genomic_DNA"/>
</dbReference>
<dbReference type="EMBL" id="CH471059">
    <property type="protein sequence ID" value="EAX07764.1"/>
    <property type="molecule type" value="Genomic_DNA"/>
</dbReference>
<dbReference type="EMBL" id="CH471059">
    <property type="protein sequence ID" value="EAX07766.1"/>
    <property type="molecule type" value="Genomic_DNA"/>
</dbReference>
<dbReference type="EMBL" id="BC011579">
    <property type="protein sequence ID" value="AAH11579.2"/>
    <property type="molecule type" value="mRNA"/>
</dbReference>
<dbReference type="EMBL" id="BC090039">
    <property type="protein sequence ID" value="AAH90039.1"/>
    <property type="molecule type" value="mRNA"/>
</dbReference>
<dbReference type="EMBL" id="AL136683">
    <property type="protein sequence ID" value="CAB66618.1"/>
    <property type="status" value="ALT_INIT"/>
    <property type="molecule type" value="mRNA"/>
</dbReference>
<dbReference type="EMBL" id="AK222642">
    <property type="protein sequence ID" value="BAD96362.1"/>
    <property type="molecule type" value="mRNA"/>
</dbReference>
<dbReference type="CCDS" id="CCDS297.2">
    <molecule id="Q9H0R3-1"/>
</dbReference>
<dbReference type="RefSeq" id="NP_115501.2">
    <molecule id="Q9H0R3-1"/>
    <property type="nucleotide sequence ID" value="NM_032125.3"/>
</dbReference>
<dbReference type="RefSeq" id="XP_047287731.1">
    <molecule id="Q9H0R3-2"/>
    <property type="nucleotide sequence ID" value="XM_047431775.1"/>
</dbReference>
<dbReference type="RefSeq" id="XP_054195039.1">
    <molecule id="Q9H0R3-2"/>
    <property type="nucleotide sequence ID" value="XM_054339064.1"/>
</dbReference>
<dbReference type="BioGRID" id="123860">
    <property type="interactions" value="54"/>
</dbReference>
<dbReference type="FunCoup" id="Q9H0R3">
    <property type="interactions" value="304"/>
</dbReference>
<dbReference type="IntAct" id="Q9H0R3">
    <property type="interactions" value="43"/>
</dbReference>
<dbReference type="STRING" id="9606.ENSP00000483276"/>
<dbReference type="GlyGen" id="Q9H0R3">
    <property type="glycosylation" value="1 site"/>
</dbReference>
<dbReference type="iPTMnet" id="Q9H0R3"/>
<dbReference type="PhosphoSitePlus" id="Q9H0R3"/>
<dbReference type="SwissPalm" id="Q9H0R3"/>
<dbReference type="BioMuta" id="TMEM222"/>
<dbReference type="DMDM" id="112823989"/>
<dbReference type="jPOST" id="Q9H0R3"/>
<dbReference type="MassIVE" id="Q9H0R3"/>
<dbReference type="PaxDb" id="9606-ENSP00000483276"/>
<dbReference type="PeptideAtlas" id="Q9H0R3"/>
<dbReference type="ProteomicsDB" id="80314">
    <molecule id="Q9H0R3-1"/>
</dbReference>
<dbReference type="ProteomicsDB" id="80315">
    <molecule id="Q9H0R3-2"/>
</dbReference>
<dbReference type="Pumba" id="Q9H0R3"/>
<dbReference type="Antibodypedia" id="54779">
    <property type="antibodies" value="91 antibodies from 14 providers"/>
</dbReference>
<dbReference type="DNASU" id="84065"/>
<dbReference type="Ensembl" id="ENST00000374076.9">
    <molecule id="Q9H0R3-1"/>
    <property type="protein sequence ID" value="ENSP00000363189.4"/>
    <property type="gene ID" value="ENSG00000186501.15"/>
</dbReference>
<dbReference type="Ensembl" id="ENST00000611517.4">
    <molecule id="Q9H0R3-1"/>
    <property type="protein sequence ID" value="ENSP00000483276.1"/>
    <property type="gene ID" value="ENSG00000186501.15"/>
</dbReference>
<dbReference type="GeneID" id="84065"/>
<dbReference type="KEGG" id="hsa:84065"/>
<dbReference type="MANE-Select" id="ENST00000374076.9">
    <property type="protein sequence ID" value="ENSP00000363189.4"/>
    <property type="RefSeq nucleotide sequence ID" value="NM_032125.3"/>
    <property type="RefSeq protein sequence ID" value="NP_115501.2"/>
</dbReference>
<dbReference type="UCSC" id="uc001bnr.5">
    <molecule id="Q9H0R3-1"/>
    <property type="organism name" value="human"/>
</dbReference>
<dbReference type="AGR" id="HGNC:25363"/>
<dbReference type="CTD" id="84065"/>
<dbReference type="DisGeNET" id="84065"/>
<dbReference type="GeneCards" id="TMEM222"/>
<dbReference type="HGNC" id="HGNC:25363">
    <property type="gene designation" value="TMEM222"/>
</dbReference>
<dbReference type="HPA" id="ENSG00000186501">
    <property type="expression patterns" value="Low tissue specificity"/>
</dbReference>
<dbReference type="MalaCards" id="TMEM222"/>
<dbReference type="MIM" id="619469">
    <property type="type" value="gene"/>
</dbReference>
<dbReference type="MIM" id="619470">
    <property type="type" value="phenotype"/>
</dbReference>
<dbReference type="neXtProt" id="NX_Q9H0R3"/>
<dbReference type="Orphanet" id="528084">
    <property type="disease" value="Non-specific syndromic intellectual disability"/>
</dbReference>
<dbReference type="PharmGKB" id="PA162406598"/>
<dbReference type="VEuPathDB" id="HostDB:ENSG00000186501"/>
<dbReference type="eggNOG" id="KOG3150">
    <property type="taxonomic scope" value="Eukaryota"/>
</dbReference>
<dbReference type="GeneTree" id="ENSGT00390000007371"/>
<dbReference type="InParanoid" id="Q9H0R3"/>
<dbReference type="OMA" id="GKMKQFH"/>
<dbReference type="OrthoDB" id="267284at2759"/>
<dbReference type="PAN-GO" id="Q9H0R3">
    <property type="GO annotations" value="0 GO annotations based on evolutionary models"/>
</dbReference>
<dbReference type="PhylomeDB" id="Q9H0R3"/>
<dbReference type="TreeFam" id="TF105899"/>
<dbReference type="PathwayCommons" id="Q9H0R3"/>
<dbReference type="SignaLink" id="Q9H0R3"/>
<dbReference type="BioGRID-ORCS" id="84065">
    <property type="hits" value="19 hits in 1150 CRISPR screens"/>
</dbReference>
<dbReference type="ChiTaRS" id="TMEM222">
    <property type="organism name" value="human"/>
</dbReference>
<dbReference type="GeneWiki" id="Transmembrane_protein_222"/>
<dbReference type="GenomeRNAi" id="84065"/>
<dbReference type="Pharos" id="Q9H0R3">
    <property type="development level" value="Tdark"/>
</dbReference>
<dbReference type="PRO" id="PR:Q9H0R3"/>
<dbReference type="Proteomes" id="UP000005640">
    <property type="component" value="Chromosome 1"/>
</dbReference>
<dbReference type="RNAct" id="Q9H0R3">
    <property type="molecule type" value="protein"/>
</dbReference>
<dbReference type="Bgee" id="ENSG00000186501">
    <property type="expression patterns" value="Expressed in hypothalamus and 200 other cell types or tissues"/>
</dbReference>
<dbReference type="ExpressionAtlas" id="Q9H0R3">
    <property type="expression patterns" value="baseline and differential"/>
</dbReference>
<dbReference type="GO" id="GO:0030425">
    <property type="term" value="C:dendrite"/>
    <property type="evidence" value="ECO:0000314"/>
    <property type="project" value="UniProtKB"/>
</dbReference>
<dbReference type="GO" id="GO:0016020">
    <property type="term" value="C:membrane"/>
    <property type="evidence" value="ECO:0007669"/>
    <property type="project" value="UniProtKB-SubCell"/>
</dbReference>
<dbReference type="InterPro" id="IPR008496">
    <property type="entry name" value="TMEM222/RTE1"/>
</dbReference>
<dbReference type="PANTHER" id="PTHR20921">
    <property type="entry name" value="TRANSMEMBRANE PROTEIN 222"/>
    <property type="match status" value="1"/>
</dbReference>
<dbReference type="PANTHER" id="PTHR20921:SF0">
    <property type="entry name" value="TRANSMEMBRANE PROTEIN 222"/>
    <property type="match status" value="1"/>
</dbReference>
<dbReference type="Pfam" id="PF05608">
    <property type="entry name" value="RTE1"/>
    <property type="match status" value="1"/>
</dbReference>
<accession>Q9H0R3</accession>
<accession>D3DPL6</accession>
<accession>Q53HD8</accession>
<accession>Q5FVE9</accession>
<reference key="1">
    <citation type="journal article" date="2006" name="Nature">
        <title>The DNA sequence and biological annotation of human chromosome 1.</title>
        <authorList>
            <person name="Gregory S.G."/>
            <person name="Barlow K.F."/>
            <person name="McLay K.E."/>
            <person name="Kaul R."/>
            <person name="Swarbreck D."/>
            <person name="Dunham A."/>
            <person name="Scott C.E."/>
            <person name="Howe K.L."/>
            <person name="Woodfine K."/>
            <person name="Spencer C.C.A."/>
            <person name="Jones M.C."/>
            <person name="Gillson C."/>
            <person name="Searle S."/>
            <person name="Zhou Y."/>
            <person name="Kokocinski F."/>
            <person name="McDonald L."/>
            <person name="Evans R."/>
            <person name="Phillips K."/>
            <person name="Atkinson A."/>
            <person name="Cooper R."/>
            <person name="Jones C."/>
            <person name="Hall R.E."/>
            <person name="Andrews T.D."/>
            <person name="Lloyd C."/>
            <person name="Ainscough R."/>
            <person name="Almeida J.P."/>
            <person name="Ambrose K.D."/>
            <person name="Anderson F."/>
            <person name="Andrew R.W."/>
            <person name="Ashwell R.I.S."/>
            <person name="Aubin K."/>
            <person name="Babbage A.K."/>
            <person name="Bagguley C.L."/>
            <person name="Bailey J."/>
            <person name="Beasley H."/>
            <person name="Bethel G."/>
            <person name="Bird C.P."/>
            <person name="Bray-Allen S."/>
            <person name="Brown J.Y."/>
            <person name="Brown A.J."/>
            <person name="Buckley D."/>
            <person name="Burton J."/>
            <person name="Bye J."/>
            <person name="Carder C."/>
            <person name="Chapman J.C."/>
            <person name="Clark S.Y."/>
            <person name="Clarke G."/>
            <person name="Clee C."/>
            <person name="Cobley V."/>
            <person name="Collier R.E."/>
            <person name="Corby N."/>
            <person name="Coville G.J."/>
            <person name="Davies J."/>
            <person name="Deadman R."/>
            <person name="Dunn M."/>
            <person name="Earthrowl M."/>
            <person name="Ellington A.G."/>
            <person name="Errington H."/>
            <person name="Frankish A."/>
            <person name="Frankland J."/>
            <person name="French L."/>
            <person name="Garner P."/>
            <person name="Garnett J."/>
            <person name="Gay L."/>
            <person name="Ghori M.R.J."/>
            <person name="Gibson R."/>
            <person name="Gilby L.M."/>
            <person name="Gillett W."/>
            <person name="Glithero R.J."/>
            <person name="Grafham D.V."/>
            <person name="Griffiths C."/>
            <person name="Griffiths-Jones S."/>
            <person name="Grocock R."/>
            <person name="Hammond S."/>
            <person name="Harrison E.S.I."/>
            <person name="Hart E."/>
            <person name="Haugen E."/>
            <person name="Heath P.D."/>
            <person name="Holmes S."/>
            <person name="Holt K."/>
            <person name="Howden P.J."/>
            <person name="Hunt A.R."/>
            <person name="Hunt S.E."/>
            <person name="Hunter G."/>
            <person name="Isherwood J."/>
            <person name="James R."/>
            <person name="Johnson C."/>
            <person name="Johnson D."/>
            <person name="Joy A."/>
            <person name="Kay M."/>
            <person name="Kershaw J.K."/>
            <person name="Kibukawa M."/>
            <person name="Kimberley A.M."/>
            <person name="King A."/>
            <person name="Knights A.J."/>
            <person name="Lad H."/>
            <person name="Laird G."/>
            <person name="Lawlor S."/>
            <person name="Leongamornlert D.A."/>
            <person name="Lloyd D.M."/>
            <person name="Loveland J."/>
            <person name="Lovell J."/>
            <person name="Lush M.J."/>
            <person name="Lyne R."/>
            <person name="Martin S."/>
            <person name="Mashreghi-Mohammadi M."/>
            <person name="Matthews L."/>
            <person name="Matthews N.S.W."/>
            <person name="McLaren S."/>
            <person name="Milne S."/>
            <person name="Mistry S."/>
            <person name="Moore M.J.F."/>
            <person name="Nickerson T."/>
            <person name="O'Dell C.N."/>
            <person name="Oliver K."/>
            <person name="Palmeiri A."/>
            <person name="Palmer S.A."/>
            <person name="Parker A."/>
            <person name="Patel D."/>
            <person name="Pearce A.V."/>
            <person name="Peck A.I."/>
            <person name="Pelan S."/>
            <person name="Phelps K."/>
            <person name="Phillimore B.J."/>
            <person name="Plumb R."/>
            <person name="Rajan J."/>
            <person name="Raymond C."/>
            <person name="Rouse G."/>
            <person name="Saenphimmachak C."/>
            <person name="Sehra H.K."/>
            <person name="Sheridan E."/>
            <person name="Shownkeen R."/>
            <person name="Sims S."/>
            <person name="Skuce C.D."/>
            <person name="Smith M."/>
            <person name="Steward C."/>
            <person name="Subramanian S."/>
            <person name="Sycamore N."/>
            <person name="Tracey A."/>
            <person name="Tromans A."/>
            <person name="Van Helmond Z."/>
            <person name="Wall M."/>
            <person name="Wallis J.M."/>
            <person name="White S."/>
            <person name="Whitehead S.L."/>
            <person name="Wilkinson J.E."/>
            <person name="Willey D.L."/>
            <person name="Williams H."/>
            <person name="Wilming L."/>
            <person name="Wray P.W."/>
            <person name="Wu Z."/>
            <person name="Coulson A."/>
            <person name="Vaudin M."/>
            <person name="Sulston J.E."/>
            <person name="Durbin R.M."/>
            <person name="Hubbard T."/>
            <person name="Wooster R."/>
            <person name="Dunham I."/>
            <person name="Carter N.P."/>
            <person name="McVean G."/>
            <person name="Ross M.T."/>
            <person name="Harrow J."/>
            <person name="Olson M.V."/>
            <person name="Beck S."/>
            <person name="Rogers J."/>
            <person name="Bentley D.R."/>
        </authorList>
    </citation>
    <scope>NUCLEOTIDE SEQUENCE [LARGE SCALE GENOMIC DNA]</scope>
</reference>
<reference key="2">
    <citation type="submission" date="2005-09" db="EMBL/GenBank/DDBJ databases">
        <authorList>
            <person name="Mural R.J."/>
            <person name="Istrail S."/>
            <person name="Sutton G.G."/>
            <person name="Florea L."/>
            <person name="Halpern A.L."/>
            <person name="Mobarry C.M."/>
            <person name="Lippert R."/>
            <person name="Walenz B."/>
            <person name="Shatkay H."/>
            <person name="Dew I."/>
            <person name="Miller J.R."/>
            <person name="Flanigan M.J."/>
            <person name="Edwards N.J."/>
            <person name="Bolanos R."/>
            <person name="Fasulo D."/>
            <person name="Halldorsson B.V."/>
            <person name="Hannenhalli S."/>
            <person name="Turner R."/>
            <person name="Yooseph S."/>
            <person name="Lu F."/>
            <person name="Nusskern D.R."/>
            <person name="Shue B.C."/>
            <person name="Zheng X.H."/>
            <person name="Zhong F."/>
            <person name="Delcher A.L."/>
            <person name="Huson D.H."/>
            <person name="Kravitz S.A."/>
            <person name="Mouchard L."/>
            <person name="Reinert K."/>
            <person name="Remington K.A."/>
            <person name="Clark A.G."/>
            <person name="Waterman M.S."/>
            <person name="Eichler E.E."/>
            <person name="Adams M.D."/>
            <person name="Hunkapiller M.W."/>
            <person name="Myers E.W."/>
            <person name="Venter J.C."/>
        </authorList>
    </citation>
    <scope>NUCLEOTIDE SEQUENCE [LARGE SCALE GENOMIC DNA]</scope>
</reference>
<reference key="3">
    <citation type="journal article" date="2004" name="Genome Res.">
        <title>The status, quality, and expansion of the NIH full-length cDNA project: the Mammalian Gene Collection (MGC).</title>
        <authorList>
            <consortium name="The MGC Project Team"/>
        </authorList>
    </citation>
    <scope>NUCLEOTIDE SEQUENCE [LARGE SCALE MRNA] (ISOFORM 2)</scope>
    <scope>NUCLEOTIDE SEQUENCE [LARGE SCALE MRNA] OF 18-208 (ISOFORM 1)</scope>
    <source>
        <tissue>Lung carcinoma</tissue>
        <tissue>Spinal ganglion</tissue>
    </source>
</reference>
<reference key="4">
    <citation type="journal article" date="2001" name="Genome Res.">
        <title>Towards a catalog of human genes and proteins: sequencing and analysis of 500 novel complete protein coding human cDNAs.</title>
        <authorList>
            <person name="Wiemann S."/>
            <person name="Weil B."/>
            <person name="Wellenreuther R."/>
            <person name="Gassenhuber J."/>
            <person name="Glassl S."/>
            <person name="Ansorge W."/>
            <person name="Boecher M."/>
            <person name="Bloecker H."/>
            <person name="Bauersachs S."/>
            <person name="Blum H."/>
            <person name="Lauber J."/>
            <person name="Duesterhoeft A."/>
            <person name="Beyer A."/>
            <person name="Koehrer K."/>
            <person name="Strack N."/>
            <person name="Mewes H.-W."/>
            <person name="Ottenwaelder B."/>
            <person name="Obermaier B."/>
            <person name="Tampe J."/>
            <person name="Heubner D."/>
            <person name="Wambutt R."/>
            <person name="Korn B."/>
            <person name="Klein M."/>
            <person name="Poustka A."/>
        </authorList>
    </citation>
    <scope>NUCLEOTIDE SEQUENCE [LARGE SCALE MRNA] OF 12-208 (ISOFORM 1)</scope>
    <source>
        <tissue>Brain</tissue>
    </source>
</reference>
<reference key="5">
    <citation type="submission" date="2005-04" db="EMBL/GenBank/DDBJ databases">
        <authorList>
            <person name="Suzuki Y."/>
            <person name="Sugano S."/>
            <person name="Totoki Y."/>
            <person name="Toyoda A."/>
            <person name="Takeda T."/>
            <person name="Sakaki Y."/>
            <person name="Tanaka A."/>
            <person name="Yokoyama S."/>
        </authorList>
    </citation>
    <scope>NUCLEOTIDE SEQUENCE [LARGE SCALE MRNA] OF 24-208 (ISOFORM 1)</scope>
    <source>
        <tissue>Cerebellum</tissue>
    </source>
</reference>
<reference key="6">
    <citation type="journal article" date="2012" name="Proc. Natl. Acad. Sci. U.S.A.">
        <title>N-terminal acetylome analyses and functional insights of the N-terminal acetyltransferase NatB.</title>
        <authorList>
            <person name="Van Damme P."/>
            <person name="Lasa M."/>
            <person name="Polevoda B."/>
            <person name="Gazquez C."/>
            <person name="Elosegui-Artola A."/>
            <person name="Kim D.S."/>
            <person name="De Juan-Pardo E."/>
            <person name="Demeyer K."/>
            <person name="Hole K."/>
            <person name="Larrea E."/>
            <person name="Timmerman E."/>
            <person name="Prieto J."/>
            <person name="Arnesen T."/>
            <person name="Sherman F."/>
            <person name="Gevaert K."/>
            <person name="Aldabe R."/>
        </authorList>
    </citation>
    <scope>IDENTIFICATION BY MASS SPECTROMETRY [LARGE SCALE ANALYSIS]</scope>
</reference>
<reference key="7">
    <citation type="journal article" date="2021" name="Genet. Med.">
        <title>Biallelic variants in TMEM222 cause a new autosomal recessive neurodevelopmental disorder.</title>
        <authorList>
            <person name="Polla D.L."/>
            <person name="Farazi Fard M.A."/>
            <person name="Tabatabaei Z."/>
            <person name="Habibzadeh P."/>
            <person name="Levchenko O.A."/>
            <person name="Nikuei P."/>
            <person name="Makrythanasis P."/>
            <person name="Hussain M."/>
            <person name="von Hardenberg S."/>
            <person name="Zeinali S."/>
            <person name="Fallah M.S."/>
            <person name="Schuurs-Hoeijmakers J.H.M."/>
            <person name="Shahzad M."/>
            <person name="Fatima F."/>
            <person name="Fatima N."/>
            <person name="Kaat L.D."/>
            <person name="Bruggenwirth H.T."/>
            <person name="Fleming L.R."/>
            <person name="Condie J."/>
            <person name="Ploski R."/>
            <person name="Pollak A."/>
            <person name="Pilch J."/>
            <person name="Demina N.A."/>
            <person name="Chukhrova A.L."/>
            <person name="Sergeeva V.S."/>
            <person name="Venselaar H."/>
            <person name="Masri A.T."/>
            <person name="Hamamy H."/>
            <person name="Santoni F.A."/>
            <person name="Linda K."/>
            <person name="Ahmed Z.M."/>
            <person name="Nadif Kasri N."/>
            <person name="de Brouwer A.P.M."/>
            <person name="Bergmann A.K."/>
            <person name="Hethey S."/>
            <person name="Yavarian M."/>
            <person name="Ansar M."/>
            <person name="Riazuddin S."/>
            <person name="Riazuddin S."/>
            <person name="Silawi M."/>
            <person name="Ruggeri G."/>
            <person name="Pirozzi F."/>
            <person name="Eftekhar E."/>
            <person name="Taghipour Sheshdeh A."/>
            <person name="Bahramjahan S."/>
            <person name="Mirzaa G.M."/>
            <person name="Lavrov A.V."/>
            <person name="Antonarakis S.E."/>
            <person name="Faghihi M.A."/>
            <person name="van Bokhoven H."/>
        </authorList>
    </citation>
    <scope>VARIANTS NEDMOSBA SER-72; 112-GLN--ARG-208 DEL; MET-148; ARG-176 AND VAL-179 DEL</scope>
    <scope>INVOLVEMENT IN NEDMOSBA</scope>
    <scope>TISSUE SPECIFICITY</scope>
    <scope>SUBCELLULAR LOCATION</scope>
</reference>
<name>TM222_HUMAN</name>
<keyword id="KW-0025">Alternative splicing</keyword>
<keyword id="KW-0966">Cell projection</keyword>
<keyword id="KW-0225">Disease variant</keyword>
<keyword id="KW-0887">Epilepsy</keyword>
<keyword id="KW-0991">Intellectual disability</keyword>
<keyword id="KW-0472">Membrane</keyword>
<keyword id="KW-1267">Proteomics identification</keyword>
<keyword id="KW-1185">Reference proteome</keyword>
<keyword id="KW-0812">Transmembrane</keyword>
<keyword id="KW-1133">Transmembrane helix</keyword>